<proteinExistence type="evidence at transcript level"/>
<comment type="function">
    <text evidence="1">Receptor for TNFRSF25 and TNFRSF6B. Mediates activation of NF-kappa-B. Inhibits vascular endothelial growth and angiogenesis (in vitro). Promotes activation of caspases and apoptosis. Promotes splenocyte alloactivation (By similarity).</text>
</comment>
<comment type="subunit">
    <text evidence="1">Homotrimer.</text>
</comment>
<comment type="subcellular location">
    <subcellularLocation>
        <location evidence="1">Membrane</location>
        <topology evidence="1">Single-pass type II membrane protein</topology>
    </subcellularLocation>
</comment>
<comment type="similarity">
    <text evidence="4">Belongs to the tumor necrosis factor family.</text>
</comment>
<name>TNF15_RAT</name>
<sequence>MAEELGLGFGEAVPVEMLPEGCRHRREARTGLAARSKACLALTCCLLSFPILAGLSTLLMTGQLRIPGKDCMFPTVTEERSAPSAQPVYTPSRDKPKAHLTIMRQTPVPHLKNELAALHWENNLGMAFTKNRMNYTNKFLVIPESGDYFIYSQITFRGTTSECGDISRVRRPKKPDSITVVITKVADSYPEPAHLLTGTKSVCEISSNWFQPIYLGAMFSLEEGDRLMVNVSDISLVDYTKEDKTFFGAFLI</sequence>
<feature type="chain" id="PRO_0000333233" description="Tumor necrosis factor ligand superfamily member 15">
    <location>
        <begin position="1"/>
        <end position="252"/>
    </location>
</feature>
<feature type="topological domain" description="Cytoplasmic" evidence="2">
    <location>
        <begin position="1"/>
        <end position="39"/>
    </location>
</feature>
<feature type="transmembrane region" description="Helical; Signal-anchor for type II membrane protein" evidence="2">
    <location>
        <begin position="40"/>
        <end position="60"/>
    </location>
</feature>
<feature type="topological domain" description="Extracellular" evidence="2">
    <location>
        <begin position="61"/>
        <end position="252"/>
    </location>
</feature>
<feature type="domain" description="THD" evidence="3">
    <location>
        <begin position="96"/>
        <end position="252"/>
    </location>
</feature>
<feature type="site" description="Important for binding TNFRSF6B" evidence="1">
    <location>
        <position position="188"/>
    </location>
</feature>
<feature type="site" description="Important for binding TNFRSF6B" evidence="1">
    <location>
        <position position="191"/>
    </location>
</feature>
<feature type="glycosylation site" description="N-linked (GlcNAc...) asparagine" evidence="2">
    <location>
        <position position="134"/>
    </location>
</feature>
<feature type="glycosylation site" description="N-linked (GlcNAc...) asparagine" evidence="2">
    <location>
        <position position="230"/>
    </location>
</feature>
<feature type="disulfide bond" evidence="3">
    <location>
        <begin position="163"/>
        <end position="203"/>
    </location>
</feature>
<accession>Q8K3Y7</accession>
<keyword id="KW-0202">Cytokine</keyword>
<keyword id="KW-1015">Disulfide bond</keyword>
<keyword id="KW-0325">Glycoprotein</keyword>
<keyword id="KW-0472">Membrane</keyword>
<keyword id="KW-1185">Reference proteome</keyword>
<keyword id="KW-0735">Signal-anchor</keyword>
<keyword id="KW-0812">Transmembrane</keyword>
<keyword id="KW-1133">Transmembrane helix</keyword>
<dbReference type="EMBL" id="AF520787">
    <property type="protein sequence ID" value="AAM77368.1"/>
    <property type="molecule type" value="mRNA"/>
</dbReference>
<dbReference type="RefSeq" id="NP_665708.1">
    <property type="nucleotide sequence ID" value="NM_145765.2"/>
</dbReference>
<dbReference type="SMR" id="Q8K3Y7"/>
<dbReference type="FunCoup" id="Q8K3Y7">
    <property type="interactions" value="9"/>
</dbReference>
<dbReference type="STRING" id="10116.ENSRNOP00000011845"/>
<dbReference type="GlyCosmos" id="Q8K3Y7">
    <property type="glycosylation" value="2 sites, No reported glycans"/>
</dbReference>
<dbReference type="GlyGen" id="Q8K3Y7">
    <property type="glycosylation" value="2 sites"/>
</dbReference>
<dbReference type="PaxDb" id="10116-ENSRNOP00000011845"/>
<dbReference type="GeneID" id="252878"/>
<dbReference type="KEGG" id="rno:252878"/>
<dbReference type="UCSC" id="RGD:628735">
    <property type="organism name" value="rat"/>
</dbReference>
<dbReference type="AGR" id="RGD:628735"/>
<dbReference type="CTD" id="9966"/>
<dbReference type="RGD" id="628735">
    <property type="gene designation" value="Tnfsf15"/>
</dbReference>
<dbReference type="eggNOG" id="ENOG502S4Q1">
    <property type="taxonomic scope" value="Eukaryota"/>
</dbReference>
<dbReference type="HOGENOM" id="CLU_070352_3_0_1"/>
<dbReference type="InParanoid" id="Q8K3Y7"/>
<dbReference type="OrthoDB" id="28273at9989"/>
<dbReference type="PhylomeDB" id="Q8K3Y7"/>
<dbReference type="TreeFam" id="TF332169"/>
<dbReference type="Reactome" id="R-RNO-5669034">
    <property type="pathway name" value="TNFs bind their physiological receptors"/>
</dbReference>
<dbReference type="PRO" id="PR:Q8K3Y7"/>
<dbReference type="Proteomes" id="UP000002494">
    <property type="component" value="Unplaced"/>
</dbReference>
<dbReference type="GO" id="GO:0005615">
    <property type="term" value="C:extracellular space"/>
    <property type="evidence" value="ECO:0000318"/>
    <property type="project" value="GO_Central"/>
</dbReference>
<dbReference type="GO" id="GO:0005886">
    <property type="term" value="C:plasma membrane"/>
    <property type="evidence" value="ECO:0000266"/>
    <property type="project" value="RGD"/>
</dbReference>
<dbReference type="GO" id="GO:0005125">
    <property type="term" value="F:cytokine activity"/>
    <property type="evidence" value="ECO:0000318"/>
    <property type="project" value="GO_Central"/>
</dbReference>
<dbReference type="GO" id="GO:0005164">
    <property type="term" value="F:tumor necrosis factor receptor binding"/>
    <property type="evidence" value="ECO:0007669"/>
    <property type="project" value="InterPro"/>
</dbReference>
<dbReference type="GO" id="GO:0007166">
    <property type="term" value="P:cell surface receptor signaling pathway"/>
    <property type="evidence" value="ECO:0000318"/>
    <property type="project" value="GO_Central"/>
</dbReference>
<dbReference type="GO" id="GO:0006955">
    <property type="term" value="P:immune response"/>
    <property type="evidence" value="ECO:0007669"/>
    <property type="project" value="InterPro"/>
</dbReference>
<dbReference type="GO" id="GO:0043123">
    <property type="term" value="P:positive regulation of canonical NF-kappaB signal transduction"/>
    <property type="evidence" value="ECO:0000318"/>
    <property type="project" value="GO_Central"/>
</dbReference>
<dbReference type="GO" id="GO:2001238">
    <property type="term" value="P:positive regulation of extrinsic apoptotic signaling pathway"/>
    <property type="evidence" value="ECO:0000318"/>
    <property type="project" value="GO_Central"/>
</dbReference>
<dbReference type="CDD" id="cd00184">
    <property type="entry name" value="TNF"/>
    <property type="match status" value="1"/>
</dbReference>
<dbReference type="FunFam" id="2.60.120.40:FF:000018">
    <property type="entry name" value="Tumor necrosis factor ligand superfamily member 15"/>
    <property type="match status" value="1"/>
</dbReference>
<dbReference type="Gene3D" id="2.60.120.40">
    <property type="match status" value="1"/>
</dbReference>
<dbReference type="InterPro" id="IPR006053">
    <property type="entry name" value="TNF"/>
</dbReference>
<dbReference type="InterPro" id="IPR006052">
    <property type="entry name" value="TNF_dom"/>
</dbReference>
<dbReference type="InterPro" id="IPR008983">
    <property type="entry name" value="Tumour_necrosis_fac-like_dom"/>
</dbReference>
<dbReference type="PANTHER" id="PTHR11471">
    <property type="entry name" value="TUMOR NECROSIS FACTOR FAMILY MEMBER"/>
    <property type="match status" value="1"/>
</dbReference>
<dbReference type="PANTHER" id="PTHR11471:SF24">
    <property type="entry name" value="TUMOR NECROSIS FACTOR LIGAND SUPERFAMILY MEMBER 15"/>
    <property type="match status" value="1"/>
</dbReference>
<dbReference type="Pfam" id="PF00229">
    <property type="entry name" value="TNF"/>
    <property type="match status" value="1"/>
</dbReference>
<dbReference type="PRINTS" id="PR01234">
    <property type="entry name" value="TNECROSISFCT"/>
</dbReference>
<dbReference type="SMART" id="SM00207">
    <property type="entry name" value="TNF"/>
    <property type="match status" value="1"/>
</dbReference>
<dbReference type="SUPFAM" id="SSF49842">
    <property type="entry name" value="TNF-like"/>
    <property type="match status" value="1"/>
</dbReference>
<dbReference type="PROSITE" id="PS50049">
    <property type="entry name" value="THD_2"/>
    <property type="match status" value="1"/>
</dbReference>
<protein>
    <recommendedName>
        <fullName>Tumor necrosis factor ligand superfamily member 15</fullName>
    </recommendedName>
    <alternativeName>
        <fullName>TNF ligand-related molecule 1</fullName>
    </alternativeName>
    <alternativeName>
        <fullName>Vascular endothelial cell growth inhibitor</fullName>
    </alternativeName>
</protein>
<organism>
    <name type="scientific">Rattus norvegicus</name>
    <name type="common">Rat</name>
    <dbReference type="NCBI Taxonomy" id="10116"/>
    <lineage>
        <taxon>Eukaryota</taxon>
        <taxon>Metazoa</taxon>
        <taxon>Chordata</taxon>
        <taxon>Craniata</taxon>
        <taxon>Vertebrata</taxon>
        <taxon>Euteleostomi</taxon>
        <taxon>Mammalia</taxon>
        <taxon>Eutheria</taxon>
        <taxon>Euarchontoglires</taxon>
        <taxon>Glires</taxon>
        <taxon>Rodentia</taxon>
        <taxon>Myomorpha</taxon>
        <taxon>Muroidea</taxon>
        <taxon>Muridae</taxon>
        <taxon>Murinae</taxon>
        <taxon>Rattus</taxon>
    </lineage>
</organism>
<reference key="1">
    <citation type="journal article" date="2002" name="Immunity">
        <title>TL1A is a TNF-like ligand for DR3 and TR6/DcR3 and functions as a T cell costimulator.</title>
        <authorList>
            <person name="Migone T.-S."/>
            <person name="Zhang J."/>
            <person name="Luo X."/>
            <person name="Zhuang L."/>
            <person name="Chen C."/>
            <person name="Hu B."/>
            <person name="Hong J.S."/>
            <person name="Perry J.W."/>
            <person name="Chen S.-F."/>
            <person name="Zhou J.X.H."/>
            <person name="Cho Y.H."/>
            <person name="Ullrich S."/>
            <person name="Kanakaraj P."/>
            <person name="Carrell J."/>
            <person name="Boyd E."/>
            <person name="Olsen H.S."/>
            <person name="Hu G."/>
            <person name="Pukac L."/>
            <person name="Liu D."/>
            <person name="Ni J."/>
            <person name="Kim S."/>
            <person name="Gentz R."/>
            <person name="Feng P."/>
            <person name="Moore P.A."/>
            <person name="Ruben S.M."/>
            <person name="Wei P."/>
        </authorList>
    </citation>
    <scope>NUCLEOTIDE SEQUENCE [MRNA]</scope>
    <source>
        <strain>Sprague-Dawley</strain>
        <tissue>Kidney</tissue>
    </source>
</reference>
<evidence type="ECO:0000250" key="1"/>
<evidence type="ECO:0000255" key="2"/>
<evidence type="ECO:0000255" key="3">
    <source>
        <dbReference type="PROSITE-ProRule" id="PRU01387"/>
    </source>
</evidence>
<evidence type="ECO:0000305" key="4"/>
<gene>
    <name type="primary">Tnfsf15</name>
    <name type="synonym">Tl1</name>
    <name type="synonym">Vegi</name>
</gene>